<keyword id="KW-0044">Antibiotic</keyword>
<keyword id="KW-0929">Antimicrobial</keyword>
<keyword id="KW-0078">Bacteriocin</keyword>
<keyword id="KW-0903">Direct protein sequencing</keyword>
<keyword id="KW-0425">Lantibiotic</keyword>
<keyword id="KW-0614">Plasmid</keyword>
<keyword id="KW-0964">Secreted</keyword>
<keyword id="KW-0883">Thioether bond</keyword>
<feature type="propeptide" id="PRO_0000408771" evidence="3">
    <location>
        <begin position="1"/>
        <end position="30"/>
    </location>
</feature>
<feature type="peptide" id="PRO_0000408772" description="Lantibiotic nukacin" evidence="3">
    <location>
        <begin position="31"/>
        <end position="57"/>
    </location>
</feature>
<feature type="modified residue" description="2,3-didehydrobutyrine" evidence="1">
    <location>
        <position position="54"/>
    </location>
</feature>
<feature type="cross-link" description="Beta-methyllanthionine (Thr-Cys)" evidence="1">
    <location>
        <begin position="39"/>
        <end position="44"/>
    </location>
</feature>
<feature type="cross-link" description="Lanthionine (Ser-Cys)" evidence="1">
    <location>
        <begin position="41"/>
        <end position="55"/>
    </location>
</feature>
<feature type="cross-link" description="Lanthionine (Ser-Cys)" evidence="1">
    <location>
        <begin position="48"/>
        <end position="56"/>
    </location>
</feature>
<evidence type="ECO:0000250" key="1">
    <source>
        <dbReference type="UniProtKB" id="Q9KWM4"/>
    </source>
</evidence>
<evidence type="ECO:0000255" key="2"/>
<evidence type="ECO:0000269" key="3">
    <source>
    </source>
</evidence>
<evidence type="ECO:0000303" key="4">
    <source>
    </source>
</evidence>
<evidence type="ECO:0000305" key="5"/>
<evidence type="ECO:0000312" key="6">
    <source>
        <dbReference type="EMBL" id="ACU82391.1"/>
    </source>
</evidence>
<organism>
    <name type="scientific">Staphylococcus simulans</name>
    <dbReference type="NCBI Taxonomy" id="1286"/>
    <lineage>
        <taxon>Bacteria</taxon>
        <taxon>Bacillati</taxon>
        <taxon>Bacillota</taxon>
        <taxon>Bacilli</taxon>
        <taxon>Bacillales</taxon>
        <taxon>Staphylococcaceae</taxon>
        <taxon>Staphylococcus</taxon>
    </lineage>
</organism>
<comment type="function">
    <text evidence="1">Lanthionine-containing peptide antibiotic (lantibiotic) active on Gram-positive bacteria. The bactericidal activity of lantibiotics is based on depolarization of energized bacterial cytoplasmic membranes, initiated by the formation of aqueous transmembrane pores (By similarity).</text>
</comment>
<comment type="biophysicochemical properties">
    <phDependence>
        <text evidence="3">Optimum pHs for antimicrobial activity are 3.0 and 6.0. Activity is reduced by 50% at alkaline pHs 9.0 and 11.0.</text>
    </phDependence>
    <temperatureDependence>
        <text evidence="3">No change in antimicrobial activity between 80 or 100 degrees Celsius after 15 minutes, but reduction in 50% antimicrobial activity at 121 degrees Celsius after 15 minutes.</text>
    </temperatureDependence>
</comment>
<comment type="subcellular location">
    <subcellularLocation>
        <location evidence="1">Secreted</location>
    </subcellularLocation>
    <text evidence="1">Through the specific ABC transporter nukT.</text>
</comment>
<comment type="PTM">
    <text evidence="1">Maturation of lantibiotics involves the enzymatic conversion of Thr, and Ser into dehydrated AA and the formation of thioether bonds with cysteine. This is followed by membrane translocation and cleavage of the modified precursor (By similarity).</text>
</comment>
<comment type="mass spectrometry"/>
<comment type="similarity">
    <text evidence="2">Belongs to the type A lantibiotic family.</text>
</comment>
<geneLocation type="plasmid" evidence="3">
    <name>pRJ97</name>
</geneLocation>
<name>LANNA_STASI</name>
<gene>
    <name evidence="1" type="primary">nukA</name>
</gene>
<dbReference type="EMBL" id="GQ380548">
    <property type="protein sequence ID" value="ACU82391.1"/>
    <property type="molecule type" value="Genomic_DNA"/>
</dbReference>
<dbReference type="RefSeq" id="WP_011152951.1">
    <property type="nucleotide sequence ID" value="NZ_QXVW01000024.1"/>
</dbReference>
<dbReference type="SMR" id="E0WX65"/>
<dbReference type="GO" id="GO:0005576">
    <property type="term" value="C:extracellular region"/>
    <property type="evidence" value="ECO:0007669"/>
    <property type="project" value="UniProtKB-SubCell"/>
</dbReference>
<dbReference type="GO" id="GO:0005102">
    <property type="term" value="F:signaling receptor binding"/>
    <property type="evidence" value="ECO:0007669"/>
    <property type="project" value="UniProtKB-KW"/>
</dbReference>
<dbReference type="GO" id="GO:0042742">
    <property type="term" value="P:defense response to bacterium"/>
    <property type="evidence" value="ECO:0007669"/>
    <property type="project" value="UniProtKB-KW"/>
</dbReference>
<dbReference type="GO" id="GO:0031640">
    <property type="term" value="P:killing of cells of another organism"/>
    <property type="evidence" value="ECO:0007669"/>
    <property type="project" value="UniProtKB-KW"/>
</dbReference>
<dbReference type="InterPro" id="IPR007682">
    <property type="entry name" value="Lantibiotic_typ-A_Lactobact"/>
</dbReference>
<dbReference type="NCBIfam" id="NF040664">
    <property type="entry name" value="HEC_x9_TCC_lant"/>
    <property type="match status" value="1"/>
</dbReference>
<dbReference type="Pfam" id="PF04604">
    <property type="entry name" value="L_biotic_typeA"/>
    <property type="match status" value="1"/>
</dbReference>
<proteinExistence type="evidence at protein level"/>
<accession>E0WX65</accession>
<protein>
    <recommendedName>
        <fullName evidence="1">Lantibiotic nukacin</fullName>
    </recommendedName>
    <alternativeName>
        <fullName evidence="4">Nukacin 3299</fullName>
    </alternativeName>
    <alternativeName>
        <fullName evidence="4 6">Simulancin 3299</fullName>
    </alternativeName>
</protein>
<sequence>MENSKVMKDIEVANLLEEVQEDELNEVLGAKKKSGVIPTVSHDCHMNSFQFVFTCCS</sequence>
<reference evidence="5 6" key="1">
    <citation type="journal article" date="2010" name="Vet. Microbiol.">
        <title>Nukacin 3299, a lantibiotic produced by Staphylococcus simulans 3299 identical to nukacin ISK-1.</title>
        <authorList>
            <person name="Ceotto H."/>
            <person name="Holo H."/>
            <person name="da Costa K.F.S."/>
            <person name="Nascimento J.S."/>
            <person name="Salehian Z."/>
            <person name="Nes I."/>
            <person name="Bastos M.C.F."/>
        </authorList>
    </citation>
    <scope>NUCLEOTIDE SEQUENCE [GENOMIC DNA]</scope>
    <scope>PROTEIN SEQUENCE OF 31-37</scope>
    <scope>BIOPHYSICOCHEMICAL PROPERTIES</scope>
    <scope>MASS SPECTROMETRY</scope>
    <source>
        <strain evidence="3">3299</strain>
    </source>
</reference>